<gene>
    <name evidence="1" type="primary">pyrB</name>
    <name type="ordered locus">plu4492</name>
</gene>
<keyword id="KW-0665">Pyrimidine biosynthesis</keyword>
<keyword id="KW-1185">Reference proteome</keyword>
<keyword id="KW-0808">Transferase</keyword>
<sequence>MANPLYRKHIISINDLSREDLELVLQTAATLKARPQPELLKPKVIASCFFEASTRTRLSFETAIHRLGASVVGFSDSSNTSLGKKGETLADTISVISQYVDAIVIRHPQEGAPRLASEFSGDTPIINAGDGANQHPTQTLLDLFTIQETQQRLDSLNIAMVGDLKYGRTVHSLSQALAKFNGNHFYFIAPEALAMPNHILHMLNEKGATYSQHANIEEVLPELDILYMTRVQKERLDPSEYANVKAQFVLRASDLIGAKENLKVLHPLPRIDEITADVDKTPYAYYFQQAENGIYARQALLSLVLNE</sequence>
<organism>
    <name type="scientific">Photorhabdus laumondii subsp. laumondii (strain DSM 15139 / CIP 105565 / TT01)</name>
    <name type="common">Photorhabdus luminescens subsp. laumondii</name>
    <dbReference type="NCBI Taxonomy" id="243265"/>
    <lineage>
        <taxon>Bacteria</taxon>
        <taxon>Pseudomonadati</taxon>
        <taxon>Pseudomonadota</taxon>
        <taxon>Gammaproteobacteria</taxon>
        <taxon>Enterobacterales</taxon>
        <taxon>Morganellaceae</taxon>
        <taxon>Photorhabdus</taxon>
    </lineage>
</organism>
<protein>
    <recommendedName>
        <fullName evidence="1">Aspartate carbamoyltransferase catalytic subunit</fullName>
        <ecNumber evidence="1">2.1.3.2</ecNumber>
    </recommendedName>
    <alternativeName>
        <fullName evidence="1">Aspartate transcarbamylase</fullName>
        <shortName evidence="1">ATCase</shortName>
    </alternativeName>
</protein>
<proteinExistence type="inferred from homology"/>
<comment type="function">
    <text evidence="1">Catalyzes the condensation of carbamoyl phosphate and aspartate to form carbamoyl aspartate and inorganic phosphate, the committed step in the de novo pyrimidine nucleotide biosynthesis pathway.</text>
</comment>
<comment type="catalytic activity">
    <reaction evidence="1">
        <text>carbamoyl phosphate + L-aspartate = N-carbamoyl-L-aspartate + phosphate + H(+)</text>
        <dbReference type="Rhea" id="RHEA:20013"/>
        <dbReference type="ChEBI" id="CHEBI:15378"/>
        <dbReference type="ChEBI" id="CHEBI:29991"/>
        <dbReference type="ChEBI" id="CHEBI:32814"/>
        <dbReference type="ChEBI" id="CHEBI:43474"/>
        <dbReference type="ChEBI" id="CHEBI:58228"/>
        <dbReference type="EC" id="2.1.3.2"/>
    </reaction>
</comment>
<comment type="pathway">
    <text evidence="1">Pyrimidine metabolism; UMP biosynthesis via de novo pathway; (S)-dihydroorotate from bicarbonate: step 2/3.</text>
</comment>
<comment type="subunit">
    <text evidence="1">Heterododecamer (2C3:3R2) of six catalytic PyrB chains organized as two trimers (C3), and six regulatory PyrI chains organized as three dimers (R2).</text>
</comment>
<comment type="similarity">
    <text evidence="1">Belongs to the aspartate/ornithine carbamoyltransferase superfamily. ATCase family.</text>
</comment>
<evidence type="ECO:0000255" key="1">
    <source>
        <dbReference type="HAMAP-Rule" id="MF_00001"/>
    </source>
</evidence>
<feature type="chain" id="PRO_0000113169" description="Aspartate carbamoyltransferase catalytic subunit">
    <location>
        <begin position="1"/>
        <end position="307"/>
    </location>
</feature>
<feature type="binding site" evidence="1">
    <location>
        <position position="55"/>
    </location>
    <ligand>
        <name>carbamoyl phosphate</name>
        <dbReference type="ChEBI" id="CHEBI:58228"/>
    </ligand>
</feature>
<feature type="binding site" evidence="1">
    <location>
        <position position="56"/>
    </location>
    <ligand>
        <name>carbamoyl phosphate</name>
        <dbReference type="ChEBI" id="CHEBI:58228"/>
    </ligand>
</feature>
<feature type="binding site" evidence="1">
    <location>
        <position position="85"/>
    </location>
    <ligand>
        <name>L-aspartate</name>
        <dbReference type="ChEBI" id="CHEBI:29991"/>
    </ligand>
</feature>
<feature type="binding site" evidence="1">
    <location>
        <position position="106"/>
    </location>
    <ligand>
        <name>carbamoyl phosphate</name>
        <dbReference type="ChEBI" id="CHEBI:58228"/>
    </ligand>
</feature>
<feature type="binding site" evidence="1">
    <location>
        <position position="135"/>
    </location>
    <ligand>
        <name>carbamoyl phosphate</name>
        <dbReference type="ChEBI" id="CHEBI:58228"/>
    </ligand>
</feature>
<feature type="binding site" evidence="1">
    <location>
        <position position="138"/>
    </location>
    <ligand>
        <name>carbamoyl phosphate</name>
        <dbReference type="ChEBI" id="CHEBI:58228"/>
    </ligand>
</feature>
<feature type="binding site" evidence="1">
    <location>
        <position position="168"/>
    </location>
    <ligand>
        <name>L-aspartate</name>
        <dbReference type="ChEBI" id="CHEBI:29991"/>
    </ligand>
</feature>
<feature type="binding site" evidence="1">
    <location>
        <position position="230"/>
    </location>
    <ligand>
        <name>L-aspartate</name>
        <dbReference type="ChEBI" id="CHEBI:29991"/>
    </ligand>
</feature>
<feature type="binding site" evidence="1">
    <location>
        <position position="268"/>
    </location>
    <ligand>
        <name>carbamoyl phosphate</name>
        <dbReference type="ChEBI" id="CHEBI:58228"/>
    </ligand>
</feature>
<feature type="binding site" evidence="1">
    <location>
        <position position="269"/>
    </location>
    <ligand>
        <name>carbamoyl phosphate</name>
        <dbReference type="ChEBI" id="CHEBI:58228"/>
    </ligand>
</feature>
<accession>Q7MZ16</accession>
<dbReference type="EC" id="2.1.3.2" evidence="1"/>
<dbReference type="EMBL" id="BX571874">
    <property type="protein sequence ID" value="CAE16864.1"/>
    <property type="molecule type" value="Genomic_DNA"/>
</dbReference>
<dbReference type="RefSeq" id="WP_011148573.1">
    <property type="nucleotide sequence ID" value="NC_005126.1"/>
</dbReference>
<dbReference type="SMR" id="Q7MZ16"/>
<dbReference type="STRING" id="243265.plu4492"/>
<dbReference type="GeneID" id="48850698"/>
<dbReference type="KEGG" id="plu:plu4492"/>
<dbReference type="eggNOG" id="COG0540">
    <property type="taxonomic scope" value="Bacteria"/>
</dbReference>
<dbReference type="HOGENOM" id="CLU_043846_1_2_6"/>
<dbReference type="OrthoDB" id="9774690at2"/>
<dbReference type="UniPathway" id="UPA00070">
    <property type="reaction ID" value="UER00116"/>
</dbReference>
<dbReference type="Proteomes" id="UP000002514">
    <property type="component" value="Chromosome"/>
</dbReference>
<dbReference type="GO" id="GO:0005829">
    <property type="term" value="C:cytosol"/>
    <property type="evidence" value="ECO:0007669"/>
    <property type="project" value="TreeGrafter"/>
</dbReference>
<dbReference type="GO" id="GO:0016597">
    <property type="term" value="F:amino acid binding"/>
    <property type="evidence" value="ECO:0007669"/>
    <property type="project" value="InterPro"/>
</dbReference>
<dbReference type="GO" id="GO:0004070">
    <property type="term" value="F:aspartate carbamoyltransferase activity"/>
    <property type="evidence" value="ECO:0007669"/>
    <property type="project" value="UniProtKB-UniRule"/>
</dbReference>
<dbReference type="GO" id="GO:0006207">
    <property type="term" value="P:'de novo' pyrimidine nucleobase biosynthetic process"/>
    <property type="evidence" value="ECO:0007669"/>
    <property type="project" value="InterPro"/>
</dbReference>
<dbReference type="GO" id="GO:0044205">
    <property type="term" value="P:'de novo' UMP biosynthetic process"/>
    <property type="evidence" value="ECO:0007669"/>
    <property type="project" value="UniProtKB-UniRule"/>
</dbReference>
<dbReference type="GO" id="GO:0006520">
    <property type="term" value="P:amino acid metabolic process"/>
    <property type="evidence" value="ECO:0007669"/>
    <property type="project" value="InterPro"/>
</dbReference>
<dbReference type="FunFam" id="3.40.50.1370:FF:000001">
    <property type="entry name" value="Aspartate carbamoyltransferase"/>
    <property type="match status" value="1"/>
</dbReference>
<dbReference type="FunFam" id="3.40.50.1370:FF:000002">
    <property type="entry name" value="Aspartate carbamoyltransferase 2"/>
    <property type="match status" value="1"/>
</dbReference>
<dbReference type="Gene3D" id="3.40.50.1370">
    <property type="entry name" value="Aspartate/ornithine carbamoyltransferase"/>
    <property type="match status" value="2"/>
</dbReference>
<dbReference type="HAMAP" id="MF_00001">
    <property type="entry name" value="Asp_carb_tr"/>
    <property type="match status" value="1"/>
</dbReference>
<dbReference type="InterPro" id="IPR006132">
    <property type="entry name" value="Asp/Orn_carbamoyltranf_P-bd"/>
</dbReference>
<dbReference type="InterPro" id="IPR006130">
    <property type="entry name" value="Asp/Orn_carbamoylTrfase"/>
</dbReference>
<dbReference type="InterPro" id="IPR036901">
    <property type="entry name" value="Asp/Orn_carbamoylTrfase_sf"/>
</dbReference>
<dbReference type="InterPro" id="IPR002082">
    <property type="entry name" value="Asp_carbamoyltransf"/>
</dbReference>
<dbReference type="InterPro" id="IPR006131">
    <property type="entry name" value="Asp_carbamoyltransf_Asp/Orn-bd"/>
</dbReference>
<dbReference type="NCBIfam" id="TIGR00670">
    <property type="entry name" value="asp_carb_tr"/>
    <property type="match status" value="1"/>
</dbReference>
<dbReference type="NCBIfam" id="NF002032">
    <property type="entry name" value="PRK00856.1"/>
    <property type="match status" value="1"/>
</dbReference>
<dbReference type="PANTHER" id="PTHR45753:SF6">
    <property type="entry name" value="ASPARTATE CARBAMOYLTRANSFERASE"/>
    <property type="match status" value="1"/>
</dbReference>
<dbReference type="PANTHER" id="PTHR45753">
    <property type="entry name" value="ORNITHINE CARBAMOYLTRANSFERASE, MITOCHONDRIAL"/>
    <property type="match status" value="1"/>
</dbReference>
<dbReference type="Pfam" id="PF00185">
    <property type="entry name" value="OTCace"/>
    <property type="match status" value="1"/>
</dbReference>
<dbReference type="Pfam" id="PF02729">
    <property type="entry name" value="OTCace_N"/>
    <property type="match status" value="1"/>
</dbReference>
<dbReference type="PRINTS" id="PR00100">
    <property type="entry name" value="AOTCASE"/>
</dbReference>
<dbReference type="PRINTS" id="PR00101">
    <property type="entry name" value="ATCASE"/>
</dbReference>
<dbReference type="SUPFAM" id="SSF53671">
    <property type="entry name" value="Aspartate/ornithine carbamoyltransferase"/>
    <property type="match status" value="1"/>
</dbReference>
<dbReference type="PROSITE" id="PS00097">
    <property type="entry name" value="CARBAMOYLTRANSFERASE"/>
    <property type="match status" value="1"/>
</dbReference>
<name>PYRB_PHOLL</name>
<reference key="1">
    <citation type="journal article" date="2003" name="Nat. Biotechnol.">
        <title>The genome sequence of the entomopathogenic bacterium Photorhabdus luminescens.</title>
        <authorList>
            <person name="Duchaud E."/>
            <person name="Rusniok C."/>
            <person name="Frangeul L."/>
            <person name="Buchrieser C."/>
            <person name="Givaudan A."/>
            <person name="Taourit S."/>
            <person name="Bocs S."/>
            <person name="Boursaux-Eude C."/>
            <person name="Chandler M."/>
            <person name="Charles J.-F."/>
            <person name="Dassa E."/>
            <person name="Derose R."/>
            <person name="Derzelle S."/>
            <person name="Freyssinet G."/>
            <person name="Gaudriault S."/>
            <person name="Medigue C."/>
            <person name="Lanois A."/>
            <person name="Powell K."/>
            <person name="Siguier P."/>
            <person name="Vincent R."/>
            <person name="Wingate V."/>
            <person name="Zouine M."/>
            <person name="Glaser P."/>
            <person name="Boemare N."/>
            <person name="Danchin A."/>
            <person name="Kunst F."/>
        </authorList>
    </citation>
    <scope>NUCLEOTIDE SEQUENCE [LARGE SCALE GENOMIC DNA]</scope>
    <source>
        <strain>DSM 15139 / CIP 105565 / TT01</strain>
    </source>
</reference>